<reference key="1">
    <citation type="journal article" date="2008" name="Genome Res.">
        <title>Comparative genome analysis of Salmonella enteritidis PT4 and Salmonella gallinarum 287/91 provides insights into evolutionary and host adaptation pathways.</title>
        <authorList>
            <person name="Thomson N.R."/>
            <person name="Clayton D.J."/>
            <person name="Windhorst D."/>
            <person name="Vernikos G."/>
            <person name="Davidson S."/>
            <person name="Churcher C."/>
            <person name="Quail M.A."/>
            <person name="Stevens M."/>
            <person name="Jones M.A."/>
            <person name="Watson M."/>
            <person name="Barron A."/>
            <person name="Layton A."/>
            <person name="Pickard D."/>
            <person name="Kingsley R.A."/>
            <person name="Bignell A."/>
            <person name="Clark L."/>
            <person name="Harris B."/>
            <person name="Ormond D."/>
            <person name="Abdellah Z."/>
            <person name="Brooks K."/>
            <person name="Cherevach I."/>
            <person name="Chillingworth T."/>
            <person name="Woodward J."/>
            <person name="Norberczak H."/>
            <person name="Lord A."/>
            <person name="Arrowsmith C."/>
            <person name="Jagels K."/>
            <person name="Moule S."/>
            <person name="Mungall K."/>
            <person name="Saunders M."/>
            <person name="Whitehead S."/>
            <person name="Chabalgoity J.A."/>
            <person name="Maskell D."/>
            <person name="Humphreys T."/>
            <person name="Roberts M."/>
            <person name="Barrow P.A."/>
            <person name="Dougan G."/>
            <person name="Parkhill J."/>
        </authorList>
    </citation>
    <scope>NUCLEOTIDE SEQUENCE [LARGE SCALE GENOMIC DNA]</scope>
    <source>
        <strain>P125109</strain>
    </source>
</reference>
<comment type="function">
    <text evidence="1">Catalyzes the conversion of UDP-4-keto-arabinose (UDP-Ara4O) to UDP-4-amino-4-deoxy-L-arabinose (UDP-L-Ara4N). The modified arabinose is attached to lipid A and is required for resistance to polymyxin and cationic antimicrobial peptides.</text>
</comment>
<comment type="catalytic activity">
    <reaction evidence="1">
        <text>UDP-4-amino-4-deoxy-beta-L-arabinose + 2-oxoglutarate = UDP-beta-L-threo-pentopyranos-4-ulose + L-glutamate</text>
        <dbReference type="Rhea" id="RHEA:24710"/>
        <dbReference type="ChEBI" id="CHEBI:16810"/>
        <dbReference type="ChEBI" id="CHEBI:29985"/>
        <dbReference type="ChEBI" id="CHEBI:58708"/>
        <dbReference type="ChEBI" id="CHEBI:58710"/>
        <dbReference type="EC" id="2.6.1.87"/>
    </reaction>
</comment>
<comment type="cofactor">
    <cofactor evidence="1">
        <name>pyridoxal 5'-phosphate</name>
        <dbReference type="ChEBI" id="CHEBI:597326"/>
    </cofactor>
</comment>
<comment type="pathway">
    <text evidence="1">Nucleotide-sugar biosynthesis; UDP-4-deoxy-4-formamido-beta-L-arabinose biosynthesis; UDP-4-deoxy-4-formamido-beta-L-arabinose from UDP-alpha-D-glucuronate: step 2/3.</text>
</comment>
<comment type="pathway">
    <text evidence="1">Bacterial outer membrane biogenesis; lipopolysaccharide biosynthesis.</text>
</comment>
<comment type="subunit">
    <text evidence="1">Homodimer.</text>
</comment>
<comment type="similarity">
    <text evidence="1">Belongs to the DegT/DnrJ/EryC1 family. ArnB subfamily.</text>
</comment>
<comment type="sequence caution" evidence="2">
    <conflict type="erroneous initiation">
        <sequence resource="EMBL-CDS" id="CAR33863"/>
    </conflict>
</comment>
<evidence type="ECO:0000255" key="1">
    <source>
        <dbReference type="HAMAP-Rule" id="MF_01167"/>
    </source>
</evidence>
<evidence type="ECO:0000305" key="2"/>
<gene>
    <name evidence="1" type="primary">arnB</name>
    <name type="ordered locus">SEN2279</name>
</gene>
<dbReference type="EC" id="2.6.1.87" evidence="1"/>
<dbReference type="EMBL" id="AM933172">
    <property type="protein sequence ID" value="CAR33863.1"/>
    <property type="status" value="ALT_INIT"/>
    <property type="molecule type" value="Genomic_DNA"/>
</dbReference>
<dbReference type="RefSeq" id="WP_001279291.1">
    <property type="nucleotide sequence ID" value="NC_011294.1"/>
</dbReference>
<dbReference type="SMR" id="B5R270"/>
<dbReference type="KEGG" id="set:SEN2279"/>
<dbReference type="HOGENOM" id="CLU_033332_0_3_6"/>
<dbReference type="UniPathway" id="UPA00030"/>
<dbReference type="UniPathway" id="UPA00032">
    <property type="reaction ID" value="UER00493"/>
</dbReference>
<dbReference type="Proteomes" id="UP000000613">
    <property type="component" value="Chromosome"/>
</dbReference>
<dbReference type="GO" id="GO:0016020">
    <property type="term" value="C:membrane"/>
    <property type="evidence" value="ECO:0007669"/>
    <property type="project" value="GOC"/>
</dbReference>
<dbReference type="GO" id="GO:0030170">
    <property type="term" value="F:pyridoxal phosphate binding"/>
    <property type="evidence" value="ECO:0007669"/>
    <property type="project" value="TreeGrafter"/>
</dbReference>
<dbReference type="GO" id="GO:0099620">
    <property type="term" value="F:UDP-4-amino-4-deoxy-L-arabinose aminotransferase"/>
    <property type="evidence" value="ECO:0007669"/>
    <property type="project" value="UniProtKB-EC"/>
</dbReference>
<dbReference type="GO" id="GO:0009245">
    <property type="term" value="P:lipid A biosynthetic process"/>
    <property type="evidence" value="ECO:0007669"/>
    <property type="project" value="UniProtKB-KW"/>
</dbReference>
<dbReference type="GO" id="GO:0009103">
    <property type="term" value="P:lipopolysaccharide biosynthetic process"/>
    <property type="evidence" value="ECO:0007669"/>
    <property type="project" value="UniProtKB-UniRule"/>
</dbReference>
<dbReference type="GO" id="GO:0046677">
    <property type="term" value="P:response to antibiotic"/>
    <property type="evidence" value="ECO:0007669"/>
    <property type="project" value="UniProtKB-KW"/>
</dbReference>
<dbReference type="CDD" id="cd00616">
    <property type="entry name" value="AHBA_syn"/>
    <property type="match status" value="1"/>
</dbReference>
<dbReference type="FunFam" id="3.40.640.10:FF:000040">
    <property type="entry name" value="UDP-4-amino-4-deoxy-L-arabinose--oxoglutarate aminotransferase"/>
    <property type="match status" value="1"/>
</dbReference>
<dbReference type="FunFam" id="3.90.1150.10:FF:000030">
    <property type="entry name" value="UDP-4-amino-4-deoxy-L-arabinose--oxoglutarate aminotransferase"/>
    <property type="match status" value="1"/>
</dbReference>
<dbReference type="Gene3D" id="3.90.1150.10">
    <property type="entry name" value="Aspartate Aminotransferase, domain 1"/>
    <property type="match status" value="1"/>
</dbReference>
<dbReference type="Gene3D" id="3.40.640.10">
    <property type="entry name" value="Type I PLP-dependent aspartate aminotransferase-like (Major domain)"/>
    <property type="match status" value="1"/>
</dbReference>
<dbReference type="HAMAP" id="MF_01167">
    <property type="entry name" value="ArnB_transfer"/>
    <property type="match status" value="1"/>
</dbReference>
<dbReference type="InterPro" id="IPR022850">
    <property type="entry name" value="ArnB_NH2Trfase"/>
</dbReference>
<dbReference type="InterPro" id="IPR000653">
    <property type="entry name" value="DegT/StrS_aminotransferase"/>
</dbReference>
<dbReference type="InterPro" id="IPR015424">
    <property type="entry name" value="PyrdxlP-dep_Trfase"/>
</dbReference>
<dbReference type="InterPro" id="IPR015421">
    <property type="entry name" value="PyrdxlP-dep_Trfase_major"/>
</dbReference>
<dbReference type="InterPro" id="IPR015422">
    <property type="entry name" value="PyrdxlP-dep_Trfase_small"/>
</dbReference>
<dbReference type="NCBIfam" id="NF008658">
    <property type="entry name" value="PRK11658.1"/>
    <property type="match status" value="1"/>
</dbReference>
<dbReference type="PANTHER" id="PTHR30244">
    <property type="entry name" value="TRANSAMINASE"/>
    <property type="match status" value="1"/>
</dbReference>
<dbReference type="PANTHER" id="PTHR30244:SF41">
    <property type="entry name" value="UDP-4-AMINO-4-DEOXY-L-ARABINOSE--OXOGLUTARATE AMINOTRANSFERASE"/>
    <property type="match status" value="1"/>
</dbReference>
<dbReference type="Pfam" id="PF01041">
    <property type="entry name" value="DegT_DnrJ_EryC1"/>
    <property type="match status" value="1"/>
</dbReference>
<dbReference type="PIRSF" id="PIRSF000390">
    <property type="entry name" value="PLP_StrS"/>
    <property type="match status" value="1"/>
</dbReference>
<dbReference type="SUPFAM" id="SSF53383">
    <property type="entry name" value="PLP-dependent transferases"/>
    <property type="match status" value="1"/>
</dbReference>
<name>ARNB_SALEP</name>
<protein>
    <recommendedName>
        <fullName evidence="1">UDP-4-amino-4-deoxy-L-arabinose--oxoglutarate aminotransferase</fullName>
        <ecNumber evidence="1">2.6.1.87</ecNumber>
    </recommendedName>
    <alternativeName>
        <fullName evidence="1">UDP-(beta-L-threo-pentapyranosyl-4''-ulose diphosphate) aminotransferase</fullName>
        <shortName evidence="1">UDP-Ara4O aminotransferase</shortName>
    </alternativeName>
    <alternativeName>
        <fullName evidence="1">UDP-4-amino-4-deoxy-L-arabinose aminotransferase</fullName>
    </alternativeName>
</protein>
<organism>
    <name type="scientific">Salmonella enteritidis PT4 (strain P125109)</name>
    <dbReference type="NCBI Taxonomy" id="550537"/>
    <lineage>
        <taxon>Bacteria</taxon>
        <taxon>Pseudomonadati</taxon>
        <taxon>Pseudomonadota</taxon>
        <taxon>Gammaproteobacteria</taxon>
        <taxon>Enterobacterales</taxon>
        <taxon>Enterobacteriaceae</taxon>
        <taxon>Salmonella</taxon>
    </lineage>
</organism>
<keyword id="KW-0032">Aminotransferase</keyword>
<keyword id="KW-0046">Antibiotic resistance</keyword>
<keyword id="KW-0441">Lipid A biosynthesis</keyword>
<keyword id="KW-0444">Lipid biosynthesis</keyword>
<keyword id="KW-0443">Lipid metabolism</keyword>
<keyword id="KW-0448">Lipopolysaccharide biosynthesis</keyword>
<keyword id="KW-0663">Pyridoxal phosphate</keyword>
<keyword id="KW-0808">Transferase</keyword>
<accession>B5R270</accession>
<sequence length="379" mass="41152">MSDFLPFSRPAMGAEELAAVKTVLDSGWITTGPKNQELEAAFCRLTGNQYAVAVSSATAGMHIALMALGIGEGDEVITPSMTWVSTLNMIVLLGATPVMVDVDRDTLMVTPEHIEAAITPQTKAIIPVHYAGAPADLDAIYALGERYGIPVIEDAAHATGTSYKGRHIGARGTAIFSFHAIKNITCAEGGIVVTDNPQFADKLRSLKFHGLGVDAWDRQSGGRAPQAEVLAPGYKYNLPDLNAAIALAQLQKLDALNARRAAIAAQYHQAMADLPFQPLSLPSWEHIHAWHLFIIRVDEARCGITRDALMASLKTKGIGTGLHFRAAHTQKYYRERFPTLTLPDTEWNSERICSLPLFPDMTESDFDRVITALHQIAGQ</sequence>
<feature type="chain" id="PRO_0000380537" description="UDP-4-amino-4-deoxy-L-arabinose--oxoglutarate aminotransferase">
    <location>
        <begin position="1"/>
        <end position="379"/>
    </location>
</feature>
<feature type="modified residue" description="N6-(pyridoxal phosphate)lysine" evidence="1">
    <location>
        <position position="182"/>
    </location>
</feature>
<proteinExistence type="inferred from homology"/>